<protein>
    <recommendedName>
        <fullName evidence="1">Acetaldehyde dehydrogenase</fullName>
        <ecNumber evidence="1">1.2.1.10</ecNumber>
    </recommendedName>
    <alternativeName>
        <fullName evidence="1">Acetaldehyde dehydrogenase [acetylating]</fullName>
    </alternativeName>
</protein>
<keyword id="KW-0058">Aromatic hydrocarbons catabolism</keyword>
<keyword id="KW-0520">NAD</keyword>
<keyword id="KW-0560">Oxidoreductase</keyword>
<reference key="1">
    <citation type="journal article" date="2008" name="PLoS Genet.">
        <title>Complete genome sequence of the N2-fixing broad host range endophyte Klebsiella pneumoniae 342 and virulence predictions verified in mice.</title>
        <authorList>
            <person name="Fouts D.E."/>
            <person name="Tyler H.L."/>
            <person name="DeBoy R.T."/>
            <person name="Daugherty S."/>
            <person name="Ren Q."/>
            <person name="Badger J.H."/>
            <person name="Durkin A.S."/>
            <person name="Huot H."/>
            <person name="Shrivastava S."/>
            <person name="Kothari S."/>
            <person name="Dodson R.J."/>
            <person name="Mohamoud Y."/>
            <person name="Khouri H."/>
            <person name="Roesch L.F.W."/>
            <person name="Krogfelt K.A."/>
            <person name="Struve C."/>
            <person name="Triplett E.W."/>
            <person name="Methe B.A."/>
        </authorList>
    </citation>
    <scope>NUCLEOTIDE SEQUENCE [LARGE SCALE GENOMIC DNA]</scope>
    <source>
        <strain>342</strain>
    </source>
</reference>
<evidence type="ECO:0000255" key="1">
    <source>
        <dbReference type="HAMAP-Rule" id="MF_01657"/>
    </source>
</evidence>
<dbReference type="EC" id="1.2.1.10" evidence="1"/>
<dbReference type="EMBL" id="CP000964">
    <property type="protein sequence ID" value="ACI11884.1"/>
    <property type="molecule type" value="Genomic_DNA"/>
</dbReference>
<dbReference type="SMR" id="B5XQJ3"/>
<dbReference type="KEGG" id="kpe:KPK_2205"/>
<dbReference type="HOGENOM" id="CLU_062208_0_0_6"/>
<dbReference type="UniPathway" id="UPA00714"/>
<dbReference type="Proteomes" id="UP000001734">
    <property type="component" value="Chromosome"/>
</dbReference>
<dbReference type="GO" id="GO:0008774">
    <property type="term" value="F:acetaldehyde dehydrogenase (acetylating) activity"/>
    <property type="evidence" value="ECO:0007669"/>
    <property type="project" value="UniProtKB-UniRule"/>
</dbReference>
<dbReference type="GO" id="GO:0051287">
    <property type="term" value="F:NAD binding"/>
    <property type="evidence" value="ECO:0007669"/>
    <property type="project" value="UniProtKB-UniRule"/>
</dbReference>
<dbReference type="GO" id="GO:0019380">
    <property type="term" value="P:3-phenylpropionate catabolic process"/>
    <property type="evidence" value="ECO:0007669"/>
    <property type="project" value="UniProtKB-UniRule"/>
</dbReference>
<dbReference type="CDD" id="cd23933">
    <property type="entry name" value="ALDH_C"/>
    <property type="match status" value="1"/>
</dbReference>
<dbReference type="FunFam" id="3.30.360.10:FF:000021">
    <property type="entry name" value="Acetaldehyde dehydrogenase"/>
    <property type="match status" value="1"/>
</dbReference>
<dbReference type="Gene3D" id="3.30.360.10">
    <property type="entry name" value="Dihydrodipicolinate Reductase, domain 2"/>
    <property type="match status" value="1"/>
</dbReference>
<dbReference type="Gene3D" id="3.40.50.720">
    <property type="entry name" value="NAD(P)-binding Rossmann-like Domain"/>
    <property type="match status" value="1"/>
</dbReference>
<dbReference type="HAMAP" id="MF_01657">
    <property type="entry name" value="Ac_ald_DH_ac"/>
    <property type="match status" value="1"/>
</dbReference>
<dbReference type="InterPro" id="IPR003361">
    <property type="entry name" value="Acetaldehyde_dehydrogenase"/>
</dbReference>
<dbReference type="InterPro" id="IPR015426">
    <property type="entry name" value="Acetylaldehyde_DH_C"/>
</dbReference>
<dbReference type="InterPro" id="IPR036291">
    <property type="entry name" value="NAD(P)-bd_dom_sf"/>
</dbReference>
<dbReference type="InterPro" id="IPR000534">
    <property type="entry name" value="Semialdehyde_DH_NAD-bd"/>
</dbReference>
<dbReference type="NCBIfam" id="TIGR03215">
    <property type="entry name" value="ac_ald_DH_ac"/>
    <property type="match status" value="1"/>
</dbReference>
<dbReference type="NCBIfam" id="NF006157">
    <property type="entry name" value="PRK08300.1"/>
    <property type="match status" value="1"/>
</dbReference>
<dbReference type="Pfam" id="PF09290">
    <property type="entry name" value="AcetDehyd-dimer"/>
    <property type="match status" value="1"/>
</dbReference>
<dbReference type="Pfam" id="PF01118">
    <property type="entry name" value="Semialdhyde_dh"/>
    <property type="match status" value="1"/>
</dbReference>
<dbReference type="PIRSF" id="PIRSF015689">
    <property type="entry name" value="Actaldh_dh_actl"/>
    <property type="match status" value="1"/>
</dbReference>
<dbReference type="SMART" id="SM00859">
    <property type="entry name" value="Semialdhyde_dh"/>
    <property type="match status" value="1"/>
</dbReference>
<dbReference type="SUPFAM" id="SSF55347">
    <property type="entry name" value="Glyceraldehyde-3-phosphate dehydrogenase-like, C-terminal domain"/>
    <property type="match status" value="1"/>
</dbReference>
<dbReference type="SUPFAM" id="SSF51735">
    <property type="entry name" value="NAD(P)-binding Rossmann-fold domains"/>
    <property type="match status" value="1"/>
</dbReference>
<feature type="chain" id="PRO_1000187037" description="Acetaldehyde dehydrogenase">
    <location>
        <begin position="1"/>
        <end position="316"/>
    </location>
</feature>
<feature type="active site" description="Acyl-thioester intermediate" evidence="1">
    <location>
        <position position="131"/>
    </location>
</feature>
<feature type="binding site" evidence="1">
    <location>
        <begin position="11"/>
        <end position="14"/>
    </location>
    <ligand>
        <name>NAD(+)</name>
        <dbReference type="ChEBI" id="CHEBI:57540"/>
    </ligand>
</feature>
<feature type="binding site" evidence="1">
    <location>
        <begin position="162"/>
        <end position="170"/>
    </location>
    <ligand>
        <name>NAD(+)</name>
        <dbReference type="ChEBI" id="CHEBI:57540"/>
    </ligand>
</feature>
<feature type="binding site" evidence="1">
    <location>
        <position position="289"/>
    </location>
    <ligand>
        <name>NAD(+)</name>
        <dbReference type="ChEBI" id="CHEBI:57540"/>
    </ligand>
</feature>
<accession>B5XQJ3</accession>
<gene>
    <name evidence="1" type="primary">mhpF</name>
    <name type="ordered locus">KPK_2205</name>
</gene>
<comment type="function">
    <text evidence="1">Catalyzes the conversion of acetaldehyde to acetyl-CoA, using NAD(+) and coenzyme A. Is the final enzyme in the meta-cleavage pathway for the degradation of aromatic compounds.</text>
</comment>
<comment type="catalytic activity">
    <reaction evidence="1">
        <text>acetaldehyde + NAD(+) + CoA = acetyl-CoA + NADH + H(+)</text>
        <dbReference type="Rhea" id="RHEA:23288"/>
        <dbReference type="ChEBI" id="CHEBI:15343"/>
        <dbReference type="ChEBI" id="CHEBI:15378"/>
        <dbReference type="ChEBI" id="CHEBI:57287"/>
        <dbReference type="ChEBI" id="CHEBI:57288"/>
        <dbReference type="ChEBI" id="CHEBI:57540"/>
        <dbReference type="ChEBI" id="CHEBI:57945"/>
        <dbReference type="EC" id="1.2.1.10"/>
    </reaction>
</comment>
<comment type="pathway">
    <text evidence="1">Aromatic compound metabolism; 3-phenylpropanoate degradation.</text>
</comment>
<comment type="subunit">
    <text evidence="1">Interacts with MhpE.</text>
</comment>
<comment type="similarity">
    <text evidence="1">Belongs to the acetaldehyde dehydrogenase family.</text>
</comment>
<organism>
    <name type="scientific">Klebsiella pneumoniae (strain 342)</name>
    <dbReference type="NCBI Taxonomy" id="507522"/>
    <lineage>
        <taxon>Bacteria</taxon>
        <taxon>Pseudomonadati</taxon>
        <taxon>Pseudomonadota</taxon>
        <taxon>Gammaproteobacteria</taxon>
        <taxon>Enterobacterales</taxon>
        <taxon>Enterobacteriaceae</taxon>
        <taxon>Klebsiella/Raoultella group</taxon>
        <taxon>Klebsiella</taxon>
        <taxon>Klebsiella pneumoniae complex</taxon>
    </lineage>
</organism>
<name>ACDH_KLEP3</name>
<sequence>MRKRKVAIIGSGNIGTDLMIKILRHGQHLEMAVMVGIDPQSDGLARARRMGVATTHEGVGGLMQMAEFADIDFVFDATSAGAHIKNDAALREAKPGIRVIDLTPAAIGPYCVPVVNLAANLHQGNVNMVTCGGQATIPMVAAVSRVAKVHYAEIVASIASQSAGPGTRANIDEFTETTSQAIEKVGGAGKGKAIIVLNPAEPPLMMRDTVYVLSELASQEAIAASIAEMAAAVQAYVPGYRLKQQVQFEVIPEDKPVNLPGIGCFSGLKTAVYLEVEGAAHYLPAYAGNLDIMTSAALATAEQMAGAMHSAAGATA</sequence>
<proteinExistence type="inferred from homology"/>